<reference key="1">
    <citation type="journal article" date="2006" name="Proc. Natl. Acad. Sci. U.S.A.">
        <title>The partitioned Rhizobium etli genome: genetic and metabolic redundancy in seven interacting replicons.</title>
        <authorList>
            <person name="Gonzalez V."/>
            <person name="Santamaria R.I."/>
            <person name="Bustos P."/>
            <person name="Hernandez-Gonzalez I."/>
            <person name="Medrano-Soto A."/>
            <person name="Moreno-Hagelsieb G."/>
            <person name="Janga S.C."/>
            <person name="Ramirez M.A."/>
            <person name="Jimenez-Jacinto V."/>
            <person name="Collado-Vides J."/>
            <person name="Davila G."/>
        </authorList>
    </citation>
    <scope>NUCLEOTIDE SEQUENCE [LARGE SCALE GENOMIC DNA]</scope>
    <source>
        <strain>ATCC 51251 / DSM 11541 / JCM 21823 / NBRC 15573 / CFN 42</strain>
    </source>
</reference>
<sequence>MATERYNPRDAEPRWQQKWNEDKVFETDNSDPREKYYVLEMFPYPSGRIHMGHVRNYAMGDVVARYKRARGYNVLHPMGWDAFGMPAENAAMERGVHPASWTYQNIASMKAQLKAMGLSLDWSREFATCDVDYYQHQQHLFLDFLEKGLVYRKQSKVNWDPVDNTVLANEQVIDGRGWRSGALVEQRELTQWFFKITDFSQELLDALDTLDQWPEKVRLMQKNWIGRSEGLTVRWEIVPETAPAGETEITVYTTRPDTLFGASFLAIAADHPLAKDAAAKNVEIEAFCEECRRAGTSLAALETAEKKGLDTGIRVRHPLDPSWELPVYIANFVLMDYGTGAIFGCPSGDQRDLDFARKYGLPVVPVVMPTDGDAASFSVGDTAYDGEGVMINSRFLDGKTTEEAFNIVADRLSAASLGNAPQGQRMINFRLRDWGISRQRYWGCPIPVIHCDACGVVPVPKKDLPVKLPEDVTFDQPGNPLDRHPTWRHVACPNCGKDARRETDTMDTFVDSSWYFTRFTAPWEAKPTDPEAANRWLPVDQYIGGIEHAILHLLYSRFFTRAMRETGHVAATEPFKGLFTQGMVVHETYSRGAGASREWVAPADIRIEEIDGKRRAFLLASDEEVAIGSIEKMSKSKKNVVDPDDIIASYGADTARFFVLSDSPPERDVIWSEAGVEGAHRFTQRLWRLISEAADCLSAVAPAPASEGEALTVSQAAHKTLKAVQNDYDKLWFNKAVARIYELVNALAAPLTRVAAGEGDIAYRAAVRDAAEILIQLVAPMTPHLAEECWAALGNAGLLARTDWPRYDETLVMENDVVLPVQINGKKRAELTISRDADQNAVTNAVLDLDAVKNALNGQAPKKIIVVPQRIVNIVV</sequence>
<protein>
    <recommendedName>
        <fullName evidence="1">Leucine--tRNA ligase</fullName>
        <ecNumber evidence="1">6.1.1.4</ecNumber>
    </recommendedName>
    <alternativeName>
        <fullName evidence="1">Leucyl-tRNA synthetase</fullName>
        <shortName evidence="1">LeuRS</shortName>
    </alternativeName>
</protein>
<feature type="chain" id="PRO_1000009407" description="Leucine--tRNA ligase">
    <location>
        <begin position="1"/>
        <end position="876"/>
    </location>
</feature>
<feature type="short sequence motif" description="'HIGH' region">
    <location>
        <begin position="43"/>
        <end position="53"/>
    </location>
</feature>
<feature type="short sequence motif" description="'KMSKS' region">
    <location>
        <begin position="632"/>
        <end position="636"/>
    </location>
</feature>
<feature type="binding site" evidence="1">
    <location>
        <position position="635"/>
    </location>
    <ligand>
        <name>ATP</name>
        <dbReference type="ChEBI" id="CHEBI:30616"/>
    </ligand>
</feature>
<accession>Q2K2S7</accession>
<evidence type="ECO:0000255" key="1">
    <source>
        <dbReference type="HAMAP-Rule" id="MF_00049"/>
    </source>
</evidence>
<organism>
    <name type="scientific">Rhizobium etli (strain ATCC 51251 / DSM 11541 / JCM 21823 / NBRC 15573 / CFN 42)</name>
    <dbReference type="NCBI Taxonomy" id="347834"/>
    <lineage>
        <taxon>Bacteria</taxon>
        <taxon>Pseudomonadati</taxon>
        <taxon>Pseudomonadota</taxon>
        <taxon>Alphaproteobacteria</taxon>
        <taxon>Hyphomicrobiales</taxon>
        <taxon>Rhizobiaceae</taxon>
        <taxon>Rhizobium/Agrobacterium group</taxon>
        <taxon>Rhizobium</taxon>
    </lineage>
</organism>
<comment type="catalytic activity">
    <reaction evidence="1">
        <text>tRNA(Leu) + L-leucine + ATP = L-leucyl-tRNA(Leu) + AMP + diphosphate</text>
        <dbReference type="Rhea" id="RHEA:11688"/>
        <dbReference type="Rhea" id="RHEA-COMP:9613"/>
        <dbReference type="Rhea" id="RHEA-COMP:9622"/>
        <dbReference type="ChEBI" id="CHEBI:30616"/>
        <dbReference type="ChEBI" id="CHEBI:33019"/>
        <dbReference type="ChEBI" id="CHEBI:57427"/>
        <dbReference type="ChEBI" id="CHEBI:78442"/>
        <dbReference type="ChEBI" id="CHEBI:78494"/>
        <dbReference type="ChEBI" id="CHEBI:456215"/>
        <dbReference type="EC" id="6.1.1.4"/>
    </reaction>
</comment>
<comment type="subcellular location">
    <subcellularLocation>
        <location evidence="1">Cytoplasm</location>
    </subcellularLocation>
</comment>
<comment type="similarity">
    <text evidence="1">Belongs to the class-I aminoacyl-tRNA synthetase family.</text>
</comment>
<gene>
    <name evidence="1" type="primary">leuS</name>
    <name type="ordered locus">RHE_CH04116</name>
</gene>
<proteinExistence type="inferred from homology"/>
<dbReference type="EC" id="6.1.1.4" evidence="1"/>
<dbReference type="EMBL" id="CP000133">
    <property type="protein sequence ID" value="ABC92859.1"/>
    <property type="molecule type" value="Genomic_DNA"/>
</dbReference>
<dbReference type="RefSeq" id="WP_011427296.1">
    <property type="nucleotide sequence ID" value="NC_007761.1"/>
</dbReference>
<dbReference type="SMR" id="Q2K2S7"/>
<dbReference type="KEGG" id="ret:RHE_CH04116"/>
<dbReference type="eggNOG" id="COG0495">
    <property type="taxonomic scope" value="Bacteria"/>
</dbReference>
<dbReference type="HOGENOM" id="CLU_004427_0_0_5"/>
<dbReference type="OrthoDB" id="9810365at2"/>
<dbReference type="Proteomes" id="UP000001936">
    <property type="component" value="Chromosome"/>
</dbReference>
<dbReference type="GO" id="GO:0005829">
    <property type="term" value="C:cytosol"/>
    <property type="evidence" value="ECO:0007669"/>
    <property type="project" value="TreeGrafter"/>
</dbReference>
<dbReference type="GO" id="GO:0002161">
    <property type="term" value="F:aminoacyl-tRNA deacylase activity"/>
    <property type="evidence" value="ECO:0007669"/>
    <property type="project" value="InterPro"/>
</dbReference>
<dbReference type="GO" id="GO:0005524">
    <property type="term" value="F:ATP binding"/>
    <property type="evidence" value="ECO:0007669"/>
    <property type="project" value="UniProtKB-UniRule"/>
</dbReference>
<dbReference type="GO" id="GO:0004823">
    <property type="term" value="F:leucine-tRNA ligase activity"/>
    <property type="evidence" value="ECO:0007669"/>
    <property type="project" value="UniProtKB-UniRule"/>
</dbReference>
<dbReference type="GO" id="GO:0006429">
    <property type="term" value="P:leucyl-tRNA aminoacylation"/>
    <property type="evidence" value="ECO:0007669"/>
    <property type="project" value="UniProtKB-UniRule"/>
</dbReference>
<dbReference type="CDD" id="cd07958">
    <property type="entry name" value="Anticodon_Ia_Leu_BEm"/>
    <property type="match status" value="1"/>
</dbReference>
<dbReference type="CDD" id="cd00812">
    <property type="entry name" value="LeuRS_core"/>
    <property type="match status" value="1"/>
</dbReference>
<dbReference type="FunFam" id="1.10.730.10:FF:000002">
    <property type="entry name" value="Leucine--tRNA ligase"/>
    <property type="match status" value="1"/>
</dbReference>
<dbReference type="FunFam" id="3.40.50.620:FF:000003">
    <property type="entry name" value="Leucine--tRNA ligase"/>
    <property type="match status" value="1"/>
</dbReference>
<dbReference type="Gene3D" id="2.20.28.290">
    <property type="match status" value="1"/>
</dbReference>
<dbReference type="Gene3D" id="3.10.20.590">
    <property type="match status" value="1"/>
</dbReference>
<dbReference type="Gene3D" id="3.40.50.620">
    <property type="entry name" value="HUPs"/>
    <property type="match status" value="2"/>
</dbReference>
<dbReference type="Gene3D" id="1.10.730.10">
    <property type="entry name" value="Isoleucyl-tRNA Synthetase, Domain 1"/>
    <property type="match status" value="1"/>
</dbReference>
<dbReference type="Gene3D" id="3.90.740.10">
    <property type="entry name" value="Valyl/Leucyl/Isoleucyl-tRNA synthetase, editing domain"/>
    <property type="match status" value="1"/>
</dbReference>
<dbReference type="HAMAP" id="MF_00049_B">
    <property type="entry name" value="Leu_tRNA_synth_B"/>
    <property type="match status" value="1"/>
</dbReference>
<dbReference type="InterPro" id="IPR001412">
    <property type="entry name" value="aa-tRNA-synth_I_CS"/>
</dbReference>
<dbReference type="InterPro" id="IPR002300">
    <property type="entry name" value="aa-tRNA-synth_Ia"/>
</dbReference>
<dbReference type="InterPro" id="IPR002302">
    <property type="entry name" value="Leu-tRNA-ligase"/>
</dbReference>
<dbReference type="InterPro" id="IPR025709">
    <property type="entry name" value="Leu_tRNA-synth_edit"/>
</dbReference>
<dbReference type="InterPro" id="IPR013155">
    <property type="entry name" value="M/V/L/I-tRNA-synth_anticd-bd"/>
</dbReference>
<dbReference type="InterPro" id="IPR015413">
    <property type="entry name" value="Methionyl/Leucyl_tRNA_Synth"/>
</dbReference>
<dbReference type="InterPro" id="IPR014729">
    <property type="entry name" value="Rossmann-like_a/b/a_fold"/>
</dbReference>
<dbReference type="InterPro" id="IPR009080">
    <property type="entry name" value="tRNAsynth_Ia_anticodon-bd"/>
</dbReference>
<dbReference type="InterPro" id="IPR009008">
    <property type="entry name" value="Val/Leu/Ile-tRNA-synth_edit"/>
</dbReference>
<dbReference type="NCBIfam" id="TIGR00396">
    <property type="entry name" value="leuS_bact"/>
    <property type="match status" value="1"/>
</dbReference>
<dbReference type="PANTHER" id="PTHR43740:SF2">
    <property type="entry name" value="LEUCINE--TRNA LIGASE, MITOCHONDRIAL"/>
    <property type="match status" value="1"/>
</dbReference>
<dbReference type="PANTHER" id="PTHR43740">
    <property type="entry name" value="LEUCYL-TRNA SYNTHETASE"/>
    <property type="match status" value="1"/>
</dbReference>
<dbReference type="Pfam" id="PF08264">
    <property type="entry name" value="Anticodon_1"/>
    <property type="match status" value="1"/>
</dbReference>
<dbReference type="Pfam" id="PF00133">
    <property type="entry name" value="tRNA-synt_1"/>
    <property type="match status" value="2"/>
</dbReference>
<dbReference type="Pfam" id="PF13603">
    <property type="entry name" value="tRNA-synt_1_2"/>
    <property type="match status" value="1"/>
</dbReference>
<dbReference type="Pfam" id="PF09334">
    <property type="entry name" value="tRNA-synt_1g"/>
    <property type="match status" value="1"/>
</dbReference>
<dbReference type="PRINTS" id="PR00985">
    <property type="entry name" value="TRNASYNTHLEU"/>
</dbReference>
<dbReference type="SUPFAM" id="SSF47323">
    <property type="entry name" value="Anticodon-binding domain of a subclass of class I aminoacyl-tRNA synthetases"/>
    <property type="match status" value="1"/>
</dbReference>
<dbReference type="SUPFAM" id="SSF52374">
    <property type="entry name" value="Nucleotidylyl transferase"/>
    <property type="match status" value="1"/>
</dbReference>
<dbReference type="SUPFAM" id="SSF50677">
    <property type="entry name" value="ValRS/IleRS/LeuRS editing domain"/>
    <property type="match status" value="1"/>
</dbReference>
<dbReference type="PROSITE" id="PS00178">
    <property type="entry name" value="AA_TRNA_LIGASE_I"/>
    <property type="match status" value="1"/>
</dbReference>
<name>SYL_RHIEC</name>
<keyword id="KW-0030">Aminoacyl-tRNA synthetase</keyword>
<keyword id="KW-0067">ATP-binding</keyword>
<keyword id="KW-0963">Cytoplasm</keyword>
<keyword id="KW-0436">Ligase</keyword>
<keyword id="KW-0547">Nucleotide-binding</keyword>
<keyword id="KW-0648">Protein biosynthesis</keyword>
<keyword id="KW-1185">Reference proteome</keyword>